<accession>A6ZS81</accession>
<name>ATG3_YEAS7</name>
<comment type="function">
    <text evidence="1">E2 conjugating enzyme required for the cytoplasm to vacuole transport (Cvt) and autophagy. Required for selective autophagic degradation of the nucleus (nucleophagy) as well as for mitophagy which contributes to regulate mitochondrial quantity and quality by eliminating the mitochondria to a basal level to fulfill cellular energy requirements and preventing excess ROS production. Responsible for the E2-like covalent binding of phosphatidylethanolamine to the C-terminal Gly of ATG8. The ATG12-ATG5 conjugate plays a role of an E3 and promotes the transfer of ATG8 from ATG3 to phosphatidylethanolamine (PE). This step is required for the membrane association of ATG8. The formation of the ATG8-phosphatidylethanolamine conjugate is essential for autophagy and for the cytoplasm to vacuole transport (Cvt). The ATG8-PE conjugate mediates tethering between adjacent membranes and stimulates membrane hemifusion, leading to expansion of the autophagosomal membrane during autophagy (By similarity).</text>
</comment>
<comment type="activity regulation">
    <text evidence="1">ATG12-ATG5 induces reorientation of the ATG3 structure, increasing conjugation activity of ATG3.</text>
</comment>
<comment type="subunit">
    <text evidence="1">Monomer (By similarity). Interacts with ATG8 through an intermediate thioester bond between Cys-234 and the C-terminal Gly of ATG8 (By similarity). Also interacts with the 40 amino acid C-terminal region of the E1-like ATG7 enzyme. Also interacts with the ATG12-ATG5 conjugate (By similarity).</text>
</comment>
<comment type="subcellular location">
    <subcellularLocation>
        <location evidence="1">Cytoplasm</location>
    </subcellularLocation>
</comment>
<comment type="domain">
    <text evidence="1">The N-terminal region (residues 1-7) is involved in phosphatidylethanolamine-binding and is required for ATG8-PE conjugation.</text>
</comment>
<comment type="domain">
    <text evidence="1">The flexible region (FR) is required for ATG7-binding.</text>
</comment>
<comment type="domain">
    <text evidence="1">The handle region (HR) contains the ATG8 interaction motif (AIM) and mediates binding to ATG8. It is crucial for the cytoplasm-to-vacuole targeting pathway (By similarity).</text>
</comment>
<comment type="PTM">
    <text evidence="1">Acetylated by NuA4 complex acetyltransferase ESA1 at Lys-19 and Lys-48. Acetylation regulates autophagy by controlling ATG8 interaction and lipidation. Deacetylated by histone deacetylase RPD3 (By similarity).</text>
</comment>
<comment type="similarity">
    <text evidence="3">Belongs to the ATG3 family.</text>
</comment>
<reference key="1">
    <citation type="journal article" date="2007" name="Proc. Natl. Acad. Sci. U.S.A.">
        <title>Genome sequencing and comparative analysis of Saccharomyces cerevisiae strain YJM789.</title>
        <authorList>
            <person name="Wei W."/>
            <person name="McCusker J.H."/>
            <person name="Hyman R.W."/>
            <person name="Jones T."/>
            <person name="Ning Y."/>
            <person name="Cao Z."/>
            <person name="Gu Z."/>
            <person name="Bruno D."/>
            <person name="Miranda M."/>
            <person name="Nguyen M."/>
            <person name="Wilhelmy J."/>
            <person name="Komp C."/>
            <person name="Tamse R."/>
            <person name="Wang X."/>
            <person name="Jia P."/>
            <person name="Luedi P."/>
            <person name="Oefner P.J."/>
            <person name="David L."/>
            <person name="Dietrich F.S."/>
            <person name="Li Y."/>
            <person name="Davis R.W."/>
            <person name="Steinmetz L.M."/>
        </authorList>
    </citation>
    <scope>NUCLEOTIDE SEQUENCE [LARGE SCALE GENOMIC DNA]</scope>
    <source>
        <strain>YJM789</strain>
    </source>
</reference>
<evidence type="ECO:0000250" key="1"/>
<evidence type="ECO:0000250" key="2">
    <source>
        <dbReference type="UniProtKB" id="P40344"/>
    </source>
</evidence>
<evidence type="ECO:0000305" key="3"/>
<feature type="chain" id="PRO_0000317831" description="Autophagy-related protein 3">
    <location>
        <begin position="1"/>
        <end position="310"/>
    </location>
</feature>
<feature type="region of interest" description="Flexible region" evidence="1">
    <location>
        <begin position="83"/>
        <end position="163"/>
    </location>
</feature>
<feature type="region of interest" description="Handle region" evidence="1">
    <location>
        <begin position="238"/>
        <end position="285"/>
    </location>
</feature>
<feature type="short sequence motif" description="ATG8 interaction motif (AIM)" evidence="1">
    <location>
        <begin position="270"/>
        <end position="273"/>
    </location>
</feature>
<feature type="active site" description="Glycyl thioester intermediate" evidence="1">
    <location>
        <position position="234"/>
    </location>
</feature>
<feature type="binding site" evidence="1">
    <location>
        <begin position="1"/>
        <end position="7"/>
    </location>
    <ligand>
        <name>a 1,2-diacylglycero-3-phosphoethanolamine</name>
        <dbReference type="ChEBI" id="CHEBI:57613"/>
    </ligand>
</feature>
<feature type="modified residue" description="N6-acetyllysine; by ESA1" evidence="2">
    <location>
        <position position="19"/>
    </location>
</feature>
<feature type="modified residue" description="N6-acetyllysine; by ESA1" evidence="2">
    <location>
        <position position="48"/>
    </location>
</feature>
<sequence length="310" mass="35887">MIRSTLSSWREYLTPITHKSTFLTTGQITPEEFVQAGDYLCHMFPTWKWNEESSDISYRDFLPKNKQFLIIRKVPCDKRAEQCVEVEGPDVIMKGFAEDGDEDDVLEYIGSETEHVQSTPAGGTKDSSIDDIDELIQDMEIKEEDENDDTEEFNAKGGLAKDMAQERYYDLYIAYSTSYRVPKMYIVGFNSNGSPLSPEQMFEDISADYRTKTATIEKLPFYKNSVLSVSIHPCKHANVMKILLDKVRVVRQRRRKELQEEQELDGVGDWEDLQDDIDDSLRVDQYLIVFLKFITSVTPSIQHDYTMEGW</sequence>
<protein>
    <recommendedName>
        <fullName>Autophagy-related protein 3</fullName>
    </recommendedName>
    <alternativeName>
        <fullName>Autophagy-related E2-like conjugation enzyme ATG3</fullName>
    </alternativeName>
</protein>
<keyword id="KW-0007">Acetylation</keyword>
<keyword id="KW-0072">Autophagy</keyword>
<keyword id="KW-0963">Cytoplasm</keyword>
<keyword id="KW-0653">Protein transport</keyword>
<keyword id="KW-0813">Transport</keyword>
<keyword id="KW-0833">Ubl conjugation pathway</keyword>
<proteinExistence type="inferred from homology"/>
<gene>
    <name type="primary">ATG3</name>
    <name type="ORF">SCY_4792</name>
</gene>
<organism>
    <name type="scientific">Saccharomyces cerevisiae (strain YJM789)</name>
    <name type="common">Baker's yeast</name>
    <dbReference type="NCBI Taxonomy" id="307796"/>
    <lineage>
        <taxon>Eukaryota</taxon>
        <taxon>Fungi</taxon>
        <taxon>Dikarya</taxon>
        <taxon>Ascomycota</taxon>
        <taxon>Saccharomycotina</taxon>
        <taxon>Saccharomycetes</taxon>
        <taxon>Saccharomycetales</taxon>
        <taxon>Saccharomycetaceae</taxon>
        <taxon>Saccharomyces</taxon>
    </lineage>
</organism>
<dbReference type="EMBL" id="AAFW02000067">
    <property type="protein sequence ID" value="EDN62813.1"/>
    <property type="molecule type" value="Genomic_DNA"/>
</dbReference>
<dbReference type="SMR" id="A6ZS81"/>
<dbReference type="HOGENOM" id="CLU_027518_2_0_1"/>
<dbReference type="Proteomes" id="UP000007060">
    <property type="component" value="Unassembled WGS sequence"/>
</dbReference>
<dbReference type="GO" id="GO:0005829">
    <property type="term" value="C:cytosol"/>
    <property type="evidence" value="ECO:0007669"/>
    <property type="project" value="TreeGrafter"/>
</dbReference>
<dbReference type="GO" id="GO:0000407">
    <property type="term" value="C:phagophore assembly site"/>
    <property type="evidence" value="ECO:0007669"/>
    <property type="project" value="TreeGrafter"/>
</dbReference>
<dbReference type="GO" id="GO:0019776">
    <property type="term" value="F:Atg8-family ligase activity"/>
    <property type="evidence" value="ECO:0007669"/>
    <property type="project" value="TreeGrafter"/>
</dbReference>
<dbReference type="GO" id="GO:0000045">
    <property type="term" value="P:autophagosome assembly"/>
    <property type="evidence" value="ECO:0007669"/>
    <property type="project" value="TreeGrafter"/>
</dbReference>
<dbReference type="GO" id="GO:0000422">
    <property type="term" value="P:autophagy of mitochondrion"/>
    <property type="evidence" value="ECO:0007669"/>
    <property type="project" value="TreeGrafter"/>
</dbReference>
<dbReference type="GO" id="GO:0061723">
    <property type="term" value="P:glycophagy"/>
    <property type="evidence" value="ECO:0007669"/>
    <property type="project" value="TreeGrafter"/>
</dbReference>
<dbReference type="GO" id="GO:0044804">
    <property type="term" value="P:nucleophagy"/>
    <property type="evidence" value="ECO:0007669"/>
    <property type="project" value="TreeGrafter"/>
</dbReference>
<dbReference type="GO" id="GO:0015031">
    <property type="term" value="P:protein transport"/>
    <property type="evidence" value="ECO:0007669"/>
    <property type="project" value="UniProtKB-KW"/>
</dbReference>
<dbReference type="Gene3D" id="3.30.1460.50">
    <property type="match status" value="1"/>
</dbReference>
<dbReference type="InterPro" id="IPR007135">
    <property type="entry name" value="Atg3/Atg10"/>
</dbReference>
<dbReference type="PANTHER" id="PTHR12866">
    <property type="entry name" value="UBIQUITIN-LIKE-CONJUGATING ENZYME ATG3"/>
    <property type="match status" value="1"/>
</dbReference>
<dbReference type="PANTHER" id="PTHR12866:SF2">
    <property type="entry name" value="UBIQUITIN-LIKE-CONJUGATING ENZYME ATG3"/>
    <property type="match status" value="1"/>
</dbReference>
<dbReference type="Pfam" id="PF03987">
    <property type="entry name" value="Autophagy_act_C"/>
    <property type="match status" value="1"/>
</dbReference>